<dbReference type="EC" id="2.7.7.38" evidence="1"/>
<dbReference type="EMBL" id="AE000511">
    <property type="protein sequence ID" value="AAD07299.1"/>
    <property type="molecule type" value="Genomic_DNA"/>
</dbReference>
<dbReference type="PIR" id="F64548">
    <property type="entry name" value="F64548"/>
</dbReference>
<dbReference type="RefSeq" id="NP_207028.1">
    <property type="nucleotide sequence ID" value="NC_000915.1"/>
</dbReference>
<dbReference type="RefSeq" id="WP_000584045.1">
    <property type="nucleotide sequence ID" value="NC_018939.1"/>
</dbReference>
<dbReference type="SMR" id="O25016"/>
<dbReference type="DIP" id="DIP-3346N"/>
<dbReference type="FunCoup" id="O25016">
    <property type="interactions" value="314"/>
</dbReference>
<dbReference type="IntAct" id="O25016">
    <property type="interactions" value="1"/>
</dbReference>
<dbReference type="MINT" id="O25016"/>
<dbReference type="STRING" id="85962.HP_0230"/>
<dbReference type="PaxDb" id="85962-C694_01160"/>
<dbReference type="EnsemblBacteria" id="AAD07299">
    <property type="protein sequence ID" value="AAD07299"/>
    <property type="gene ID" value="HP_0230"/>
</dbReference>
<dbReference type="KEGG" id="heo:C694_01160"/>
<dbReference type="KEGG" id="hpy:HP_0230"/>
<dbReference type="PATRIC" id="fig|85962.47.peg.248"/>
<dbReference type="eggNOG" id="COG1212">
    <property type="taxonomic scope" value="Bacteria"/>
</dbReference>
<dbReference type="InParanoid" id="O25016"/>
<dbReference type="OrthoDB" id="9815559at2"/>
<dbReference type="PhylomeDB" id="O25016"/>
<dbReference type="UniPathway" id="UPA00030"/>
<dbReference type="UniPathway" id="UPA00358">
    <property type="reaction ID" value="UER00476"/>
</dbReference>
<dbReference type="Proteomes" id="UP000000429">
    <property type="component" value="Chromosome"/>
</dbReference>
<dbReference type="GO" id="GO:0005829">
    <property type="term" value="C:cytosol"/>
    <property type="evidence" value="ECO:0000318"/>
    <property type="project" value="GO_Central"/>
</dbReference>
<dbReference type="GO" id="GO:0008690">
    <property type="term" value="F:3-deoxy-manno-octulosonate cytidylyltransferase activity"/>
    <property type="evidence" value="ECO:0000318"/>
    <property type="project" value="GO_Central"/>
</dbReference>
<dbReference type="GO" id="GO:0033468">
    <property type="term" value="P:CMP-keto-3-deoxy-D-manno-octulosonic acid biosynthetic process"/>
    <property type="evidence" value="ECO:0007669"/>
    <property type="project" value="UniProtKB-UniRule"/>
</dbReference>
<dbReference type="GO" id="GO:0009103">
    <property type="term" value="P:lipopolysaccharide biosynthetic process"/>
    <property type="evidence" value="ECO:0007669"/>
    <property type="project" value="UniProtKB-UniRule"/>
</dbReference>
<dbReference type="CDD" id="cd02517">
    <property type="entry name" value="CMP-KDO-Synthetase"/>
    <property type="match status" value="1"/>
</dbReference>
<dbReference type="FunFam" id="3.90.550.10:FF:000222">
    <property type="entry name" value="3-deoxy-manno-octulosonate cytidylyltransferase"/>
    <property type="match status" value="1"/>
</dbReference>
<dbReference type="Gene3D" id="3.90.550.10">
    <property type="entry name" value="Spore Coat Polysaccharide Biosynthesis Protein SpsA, Chain A"/>
    <property type="match status" value="1"/>
</dbReference>
<dbReference type="HAMAP" id="MF_00057">
    <property type="entry name" value="KdsB"/>
    <property type="match status" value="1"/>
</dbReference>
<dbReference type="InterPro" id="IPR003329">
    <property type="entry name" value="Cytidylyl_trans"/>
</dbReference>
<dbReference type="InterPro" id="IPR004528">
    <property type="entry name" value="KdsB"/>
</dbReference>
<dbReference type="InterPro" id="IPR029044">
    <property type="entry name" value="Nucleotide-diphossugar_trans"/>
</dbReference>
<dbReference type="NCBIfam" id="TIGR00466">
    <property type="entry name" value="kdsB"/>
    <property type="match status" value="1"/>
</dbReference>
<dbReference type="NCBIfam" id="NF003952">
    <property type="entry name" value="PRK05450.1-5"/>
    <property type="match status" value="1"/>
</dbReference>
<dbReference type="PANTHER" id="PTHR42866">
    <property type="entry name" value="3-DEOXY-MANNO-OCTULOSONATE CYTIDYLYLTRANSFERASE"/>
    <property type="match status" value="1"/>
</dbReference>
<dbReference type="PANTHER" id="PTHR42866:SF2">
    <property type="entry name" value="3-DEOXY-MANNO-OCTULOSONATE CYTIDYLYLTRANSFERASE, MITOCHONDRIAL"/>
    <property type="match status" value="1"/>
</dbReference>
<dbReference type="Pfam" id="PF02348">
    <property type="entry name" value="CTP_transf_3"/>
    <property type="match status" value="1"/>
</dbReference>
<dbReference type="SUPFAM" id="SSF53448">
    <property type="entry name" value="Nucleotide-diphospho-sugar transferases"/>
    <property type="match status" value="1"/>
</dbReference>
<name>KDSB_HELPY</name>
<reference key="1">
    <citation type="journal article" date="1997" name="Nature">
        <title>The complete genome sequence of the gastric pathogen Helicobacter pylori.</title>
        <authorList>
            <person name="Tomb J.-F."/>
            <person name="White O."/>
            <person name="Kerlavage A.R."/>
            <person name="Clayton R.A."/>
            <person name="Sutton G.G."/>
            <person name="Fleischmann R.D."/>
            <person name="Ketchum K.A."/>
            <person name="Klenk H.-P."/>
            <person name="Gill S.R."/>
            <person name="Dougherty B.A."/>
            <person name="Nelson K.E."/>
            <person name="Quackenbush J."/>
            <person name="Zhou L."/>
            <person name="Kirkness E.F."/>
            <person name="Peterson S.N."/>
            <person name="Loftus B.J."/>
            <person name="Richardson D.L."/>
            <person name="Dodson R.J."/>
            <person name="Khalak H.G."/>
            <person name="Glodek A."/>
            <person name="McKenney K."/>
            <person name="FitzGerald L.M."/>
            <person name="Lee N."/>
            <person name="Adams M.D."/>
            <person name="Hickey E.K."/>
            <person name="Berg D.E."/>
            <person name="Gocayne J.D."/>
            <person name="Utterback T.R."/>
            <person name="Peterson J.D."/>
            <person name="Kelley J.M."/>
            <person name="Cotton M.D."/>
            <person name="Weidman J.F."/>
            <person name="Fujii C."/>
            <person name="Bowman C."/>
            <person name="Watthey L."/>
            <person name="Wallin E."/>
            <person name="Hayes W.S."/>
            <person name="Borodovsky M."/>
            <person name="Karp P.D."/>
            <person name="Smith H.O."/>
            <person name="Fraser C.M."/>
            <person name="Venter J.C."/>
        </authorList>
    </citation>
    <scope>NUCLEOTIDE SEQUENCE [LARGE SCALE GENOMIC DNA]</scope>
    <source>
        <strain>ATCC 700392 / 26695</strain>
    </source>
</reference>
<organism>
    <name type="scientific">Helicobacter pylori (strain ATCC 700392 / 26695)</name>
    <name type="common">Campylobacter pylori</name>
    <dbReference type="NCBI Taxonomy" id="85962"/>
    <lineage>
        <taxon>Bacteria</taxon>
        <taxon>Pseudomonadati</taxon>
        <taxon>Campylobacterota</taxon>
        <taxon>Epsilonproteobacteria</taxon>
        <taxon>Campylobacterales</taxon>
        <taxon>Helicobacteraceae</taxon>
        <taxon>Helicobacter</taxon>
    </lineage>
</organism>
<feature type="chain" id="PRO_0000188507" description="3-deoxy-manno-octulosonate cytidylyltransferase">
    <location>
        <begin position="1"/>
        <end position="243"/>
    </location>
</feature>
<evidence type="ECO:0000255" key="1">
    <source>
        <dbReference type="HAMAP-Rule" id="MF_00057"/>
    </source>
</evidence>
<keyword id="KW-0963">Cytoplasm</keyword>
<keyword id="KW-0448">Lipopolysaccharide biosynthesis</keyword>
<keyword id="KW-0548">Nucleotidyltransferase</keyword>
<keyword id="KW-1185">Reference proteome</keyword>
<keyword id="KW-0808">Transferase</keyword>
<gene>
    <name evidence="1" type="primary">kdsB</name>
    <name type="ordered locus">HP_0230</name>
</gene>
<accession>O25016</accession>
<proteinExistence type="inferred from homology"/>
<comment type="function">
    <text evidence="1">Activates KDO (a required 8-carbon sugar) for incorporation into bacterial lipopolysaccharide in Gram-negative bacteria.</text>
</comment>
<comment type="catalytic activity">
    <reaction evidence="1">
        <text>3-deoxy-alpha-D-manno-oct-2-ulosonate + CTP = CMP-3-deoxy-beta-D-manno-octulosonate + diphosphate</text>
        <dbReference type="Rhea" id="RHEA:23448"/>
        <dbReference type="ChEBI" id="CHEBI:33019"/>
        <dbReference type="ChEBI" id="CHEBI:37563"/>
        <dbReference type="ChEBI" id="CHEBI:85986"/>
        <dbReference type="ChEBI" id="CHEBI:85987"/>
        <dbReference type="EC" id="2.7.7.38"/>
    </reaction>
</comment>
<comment type="pathway">
    <text evidence="1">Nucleotide-sugar biosynthesis; CMP-3-deoxy-D-manno-octulosonate biosynthesis; CMP-3-deoxy-D-manno-octulosonate from 3-deoxy-D-manno-octulosonate and CTP: step 1/1.</text>
</comment>
<comment type="pathway">
    <text evidence="1">Bacterial outer membrane biogenesis; lipopolysaccharide biosynthesis.</text>
</comment>
<comment type="subcellular location">
    <subcellularLocation>
        <location evidence="1">Cytoplasm</location>
    </subcellularLocation>
</comment>
<comment type="similarity">
    <text evidence="1">Belongs to the KdsB family.</text>
</comment>
<protein>
    <recommendedName>
        <fullName evidence="1">3-deoxy-manno-octulosonate cytidylyltransferase</fullName>
        <ecNumber evidence="1">2.7.7.38</ecNumber>
    </recommendedName>
    <alternativeName>
        <fullName evidence="1">CMP-2-keto-3-deoxyoctulosonic acid synthase</fullName>
        <shortName evidence="1">CKS</shortName>
        <shortName evidence="1">CMP-KDO synthase</shortName>
    </alternativeName>
</protein>
<sequence>MIIIPARLKSSRFENKVLEDIFGLPMVVRCAKNANLVDECVVACDDESIMQTCQKFHIKAVLTSKHHNSGTERCLEAARILGLKNDERVLNLQGDEPFLEKEVILALLEATKNAPFMATCAKVIDEEQAKSPNLVKVVLDSQNNALYFSRSLIPFLRDFDAKRQTPLLGHIGIYGFHNKEILEELCALKPCVLEEIEKLEQLRALYYQKKIAVKIVQSESVGIDTQEDLQNALKIFSPDLLER</sequence>